<accession>C1L2R5</accession>
<protein>
    <recommendedName>
        <fullName evidence="1">Transcription antitermination protein NusB</fullName>
    </recommendedName>
    <alternativeName>
        <fullName evidence="1">Antitermination factor NusB</fullName>
    </alternativeName>
</protein>
<name>NUSB_LISMC</name>
<comment type="function">
    <text evidence="1">Involved in transcription antitermination. Required for transcription of ribosomal RNA (rRNA) genes. Binds specifically to the boxA antiterminator sequence of the ribosomal RNA (rrn) operons.</text>
</comment>
<comment type="similarity">
    <text evidence="1">Belongs to the NusB family.</text>
</comment>
<sequence>MKRREAREKALQALFQIELNEMSLDQAIKNIMEDEQDDYMEKLVEGVMANKAEIDAIIEPNLDNWRMDRLSKVDLSLLRLSVYEIKYLDDVPNRVSLNESIEIAKIYSDEKSSKFINGVLANIAPEDK</sequence>
<keyword id="KW-0694">RNA-binding</keyword>
<keyword id="KW-0804">Transcription</keyword>
<keyword id="KW-0889">Transcription antitermination</keyword>
<keyword id="KW-0805">Transcription regulation</keyword>
<feature type="chain" id="PRO_1000202484" description="Transcription antitermination protein NusB">
    <location>
        <begin position="1"/>
        <end position="128"/>
    </location>
</feature>
<proteinExistence type="inferred from homology"/>
<reference key="1">
    <citation type="journal article" date="2012" name="BMC Genomics">
        <title>Comparative genomics and transcriptomics of lineages I, II, and III strains of Listeria monocytogenes.</title>
        <authorList>
            <person name="Hain T."/>
            <person name="Ghai R."/>
            <person name="Billion A."/>
            <person name="Kuenne C.T."/>
            <person name="Steinweg C."/>
            <person name="Izar B."/>
            <person name="Mohamed W."/>
            <person name="Mraheil M."/>
            <person name="Domann E."/>
            <person name="Schaffrath S."/>
            <person name="Karst U."/>
            <person name="Goesmann A."/>
            <person name="Oehm S."/>
            <person name="Puhler A."/>
            <person name="Merkl R."/>
            <person name="Vorwerk S."/>
            <person name="Glaser P."/>
            <person name="Garrido P."/>
            <person name="Rusniok C."/>
            <person name="Buchrieser C."/>
            <person name="Goebel W."/>
            <person name="Chakraborty T."/>
        </authorList>
    </citation>
    <scope>NUCLEOTIDE SEQUENCE [LARGE SCALE GENOMIC DNA]</scope>
    <source>
        <strain>CLIP80459</strain>
    </source>
</reference>
<dbReference type="EMBL" id="FM242711">
    <property type="protein sequence ID" value="CAS05131.1"/>
    <property type="molecule type" value="Genomic_DNA"/>
</dbReference>
<dbReference type="RefSeq" id="WP_003722486.1">
    <property type="nucleotide sequence ID" value="NC_012488.1"/>
</dbReference>
<dbReference type="SMR" id="C1L2R5"/>
<dbReference type="GeneID" id="93239235"/>
<dbReference type="KEGG" id="lmc:Lm4b_01367"/>
<dbReference type="HOGENOM" id="CLU_087843_3_1_9"/>
<dbReference type="GO" id="GO:0005829">
    <property type="term" value="C:cytosol"/>
    <property type="evidence" value="ECO:0007669"/>
    <property type="project" value="TreeGrafter"/>
</dbReference>
<dbReference type="GO" id="GO:0003723">
    <property type="term" value="F:RNA binding"/>
    <property type="evidence" value="ECO:0007669"/>
    <property type="project" value="UniProtKB-UniRule"/>
</dbReference>
<dbReference type="GO" id="GO:0006353">
    <property type="term" value="P:DNA-templated transcription termination"/>
    <property type="evidence" value="ECO:0007669"/>
    <property type="project" value="UniProtKB-UniRule"/>
</dbReference>
<dbReference type="GO" id="GO:0031564">
    <property type="term" value="P:transcription antitermination"/>
    <property type="evidence" value="ECO:0007669"/>
    <property type="project" value="UniProtKB-KW"/>
</dbReference>
<dbReference type="CDD" id="cd00619">
    <property type="entry name" value="Terminator_NusB"/>
    <property type="match status" value="1"/>
</dbReference>
<dbReference type="FunFam" id="1.10.940.10:FF:000003">
    <property type="entry name" value="Transcription antitermination factor NusB"/>
    <property type="match status" value="1"/>
</dbReference>
<dbReference type="Gene3D" id="1.10.940.10">
    <property type="entry name" value="NusB-like"/>
    <property type="match status" value="1"/>
</dbReference>
<dbReference type="HAMAP" id="MF_00073">
    <property type="entry name" value="NusB"/>
    <property type="match status" value="1"/>
</dbReference>
<dbReference type="InterPro" id="IPR035926">
    <property type="entry name" value="NusB-like_sf"/>
</dbReference>
<dbReference type="InterPro" id="IPR011605">
    <property type="entry name" value="NusB_fam"/>
</dbReference>
<dbReference type="InterPro" id="IPR006027">
    <property type="entry name" value="NusB_RsmB_TIM44"/>
</dbReference>
<dbReference type="NCBIfam" id="TIGR01951">
    <property type="entry name" value="nusB"/>
    <property type="match status" value="1"/>
</dbReference>
<dbReference type="NCBIfam" id="NF001223">
    <property type="entry name" value="PRK00202.1-1"/>
    <property type="match status" value="1"/>
</dbReference>
<dbReference type="PANTHER" id="PTHR11078:SF3">
    <property type="entry name" value="ANTITERMINATION NUSB DOMAIN-CONTAINING PROTEIN"/>
    <property type="match status" value="1"/>
</dbReference>
<dbReference type="PANTHER" id="PTHR11078">
    <property type="entry name" value="N UTILIZATION SUBSTANCE PROTEIN B-RELATED"/>
    <property type="match status" value="1"/>
</dbReference>
<dbReference type="Pfam" id="PF01029">
    <property type="entry name" value="NusB"/>
    <property type="match status" value="1"/>
</dbReference>
<dbReference type="SUPFAM" id="SSF48013">
    <property type="entry name" value="NusB-like"/>
    <property type="match status" value="1"/>
</dbReference>
<evidence type="ECO:0000255" key="1">
    <source>
        <dbReference type="HAMAP-Rule" id="MF_00073"/>
    </source>
</evidence>
<gene>
    <name evidence="1" type="primary">nusB</name>
    <name type="ordered locus">Lm4b_01367</name>
</gene>
<organism>
    <name type="scientific">Listeria monocytogenes serotype 4b (strain CLIP80459)</name>
    <dbReference type="NCBI Taxonomy" id="568819"/>
    <lineage>
        <taxon>Bacteria</taxon>
        <taxon>Bacillati</taxon>
        <taxon>Bacillota</taxon>
        <taxon>Bacilli</taxon>
        <taxon>Bacillales</taxon>
        <taxon>Listeriaceae</taxon>
        <taxon>Listeria</taxon>
    </lineage>
</organism>